<keyword id="KW-0963">Cytoplasm</keyword>
<keyword id="KW-0479">Metal-binding</keyword>
<keyword id="KW-0862">Zinc</keyword>
<protein>
    <recommendedName>
        <fullName evidence="1">Protein SprT-like</fullName>
    </recommendedName>
</protein>
<reference key="1">
    <citation type="journal article" date="2004" name="Nucleic Acids Res.">
        <title>Whole genome comparisons of serotype 4b and 1/2a strains of the food-borne pathogen Listeria monocytogenes reveal new insights into the core genome components of this species.</title>
        <authorList>
            <person name="Nelson K.E."/>
            <person name="Fouts D.E."/>
            <person name="Mongodin E.F."/>
            <person name="Ravel J."/>
            <person name="DeBoy R.T."/>
            <person name="Kolonay J.F."/>
            <person name="Rasko D.A."/>
            <person name="Angiuoli S.V."/>
            <person name="Gill S.R."/>
            <person name="Paulsen I.T."/>
            <person name="Peterson J.D."/>
            <person name="White O."/>
            <person name="Nelson W.C."/>
            <person name="Nierman W.C."/>
            <person name="Beanan M.J."/>
            <person name="Brinkac L.M."/>
            <person name="Daugherty S.C."/>
            <person name="Dodson R.J."/>
            <person name="Durkin A.S."/>
            <person name="Madupu R."/>
            <person name="Haft D.H."/>
            <person name="Selengut J."/>
            <person name="Van Aken S.E."/>
            <person name="Khouri H.M."/>
            <person name="Fedorova N."/>
            <person name="Forberger H.A."/>
            <person name="Tran B."/>
            <person name="Kathariou S."/>
            <person name="Wonderling L.D."/>
            <person name="Uhlich G.A."/>
            <person name="Bayles D.O."/>
            <person name="Luchansky J.B."/>
            <person name="Fraser C.M."/>
        </authorList>
    </citation>
    <scope>NUCLEOTIDE SEQUENCE [LARGE SCALE GENOMIC DNA]</scope>
    <source>
        <strain>F2365</strain>
    </source>
</reference>
<feature type="chain" id="PRO_0000213293" description="Protein SprT-like">
    <location>
        <begin position="1"/>
        <end position="155"/>
    </location>
</feature>
<feature type="domain" description="SprT-like" evidence="1">
    <location>
        <begin position="7"/>
        <end position="145"/>
    </location>
</feature>
<feature type="active site" evidence="1">
    <location>
        <position position="68"/>
    </location>
</feature>
<feature type="binding site" evidence="1">
    <location>
        <position position="67"/>
    </location>
    <ligand>
        <name>Zn(2+)</name>
        <dbReference type="ChEBI" id="CHEBI:29105"/>
    </ligand>
</feature>
<feature type="binding site" evidence="1">
    <location>
        <position position="71"/>
    </location>
    <ligand>
        <name>Zn(2+)</name>
        <dbReference type="ChEBI" id="CHEBI:29105"/>
    </ligand>
</feature>
<organism>
    <name type="scientific">Listeria monocytogenes serotype 4b (strain F2365)</name>
    <dbReference type="NCBI Taxonomy" id="265669"/>
    <lineage>
        <taxon>Bacteria</taxon>
        <taxon>Bacillati</taxon>
        <taxon>Bacillota</taxon>
        <taxon>Bacilli</taxon>
        <taxon>Bacillales</taxon>
        <taxon>Listeriaceae</taxon>
        <taxon>Listeria</taxon>
    </lineage>
</organism>
<name>SPRTL_LISMF</name>
<gene>
    <name type="ordered locus">LMOf2365_0918</name>
</gene>
<accession>Q721R7</accession>
<proteinExistence type="inferred from homology"/>
<sequence length="155" mass="18480">MNQAELQRHMEEVSLQFFQKEFRHQAVFNARLRTTGGRYLLKSHNIEMNPKYLENFGLAYFIGIMKHELCHYHLHLEKKGYQHRDQDFRELLKKVDAPRFCATIPREITMHEYTCKSCGKSFLRQRRFNVNRYRCGSCGGKLIQTGSKKIYTENA</sequence>
<comment type="cofactor">
    <cofactor evidence="1">
        <name>Zn(2+)</name>
        <dbReference type="ChEBI" id="CHEBI:29105"/>
    </cofactor>
    <text evidence="1">Binds 1 zinc ion.</text>
</comment>
<comment type="subcellular location">
    <subcellularLocation>
        <location evidence="1">Cytoplasm</location>
    </subcellularLocation>
</comment>
<comment type="similarity">
    <text evidence="1">Belongs to the SprT family.</text>
</comment>
<evidence type="ECO:0000255" key="1">
    <source>
        <dbReference type="HAMAP-Rule" id="MF_00745"/>
    </source>
</evidence>
<dbReference type="EMBL" id="AE017262">
    <property type="protein sequence ID" value="AAT03697.1"/>
    <property type="molecule type" value="Genomic_DNA"/>
</dbReference>
<dbReference type="RefSeq" id="WP_003727107.1">
    <property type="nucleotide sequence ID" value="NC_002973.6"/>
</dbReference>
<dbReference type="KEGG" id="lmf:LMOf2365_0918"/>
<dbReference type="HOGENOM" id="CLU_123820_0_0_9"/>
<dbReference type="GO" id="GO:0005737">
    <property type="term" value="C:cytoplasm"/>
    <property type="evidence" value="ECO:0007669"/>
    <property type="project" value="UniProtKB-SubCell"/>
</dbReference>
<dbReference type="GO" id="GO:0008270">
    <property type="term" value="F:zinc ion binding"/>
    <property type="evidence" value="ECO:0007669"/>
    <property type="project" value="UniProtKB-UniRule"/>
</dbReference>
<dbReference type="GO" id="GO:0006950">
    <property type="term" value="P:response to stress"/>
    <property type="evidence" value="ECO:0007669"/>
    <property type="project" value="UniProtKB-ARBA"/>
</dbReference>
<dbReference type="HAMAP" id="MF_00745">
    <property type="entry name" value="SprT_like"/>
    <property type="match status" value="1"/>
</dbReference>
<dbReference type="InterPro" id="IPR006640">
    <property type="entry name" value="SprT-like_domain"/>
</dbReference>
<dbReference type="InterPro" id="IPR035240">
    <property type="entry name" value="SprT_Zn_ribbon"/>
</dbReference>
<dbReference type="InterPro" id="IPR023524">
    <property type="entry name" value="Uncharacterised_SprT-like"/>
</dbReference>
<dbReference type="NCBIfam" id="NF003339">
    <property type="entry name" value="PRK04351.1"/>
    <property type="match status" value="1"/>
</dbReference>
<dbReference type="Pfam" id="PF10263">
    <property type="entry name" value="SprT-like"/>
    <property type="match status" value="1"/>
</dbReference>
<dbReference type="Pfam" id="PF17283">
    <property type="entry name" value="Zn_ribbon_SprT"/>
    <property type="match status" value="1"/>
</dbReference>
<dbReference type="SMART" id="SM00731">
    <property type="entry name" value="SprT"/>
    <property type="match status" value="1"/>
</dbReference>